<accession>A1VDN2</accession>
<protein>
    <recommendedName>
        <fullName evidence="1">Leucyl/phenylalanyl-tRNA--protein transferase</fullName>
        <ecNumber evidence="1">2.3.2.6</ecNumber>
    </recommendedName>
    <alternativeName>
        <fullName evidence="1">L/F-transferase</fullName>
    </alternativeName>
    <alternativeName>
        <fullName evidence="1">Leucyltransferase</fullName>
    </alternativeName>
    <alternativeName>
        <fullName evidence="1">Phenyalanyltransferase</fullName>
    </alternativeName>
</protein>
<comment type="function">
    <text evidence="1">Functions in the N-end rule pathway of protein degradation where it conjugates Leu, Phe and, less efficiently, Met from aminoacyl-tRNAs to the N-termini of proteins containing an N-terminal arginine or lysine.</text>
</comment>
<comment type="catalytic activity">
    <reaction evidence="1">
        <text>N-terminal L-lysyl-[protein] + L-leucyl-tRNA(Leu) = N-terminal L-leucyl-L-lysyl-[protein] + tRNA(Leu) + H(+)</text>
        <dbReference type="Rhea" id="RHEA:12340"/>
        <dbReference type="Rhea" id="RHEA-COMP:9613"/>
        <dbReference type="Rhea" id="RHEA-COMP:9622"/>
        <dbReference type="Rhea" id="RHEA-COMP:12670"/>
        <dbReference type="Rhea" id="RHEA-COMP:12671"/>
        <dbReference type="ChEBI" id="CHEBI:15378"/>
        <dbReference type="ChEBI" id="CHEBI:65249"/>
        <dbReference type="ChEBI" id="CHEBI:78442"/>
        <dbReference type="ChEBI" id="CHEBI:78494"/>
        <dbReference type="ChEBI" id="CHEBI:133043"/>
        <dbReference type="EC" id="2.3.2.6"/>
    </reaction>
</comment>
<comment type="catalytic activity">
    <reaction evidence="1">
        <text>N-terminal L-arginyl-[protein] + L-leucyl-tRNA(Leu) = N-terminal L-leucyl-L-arginyl-[protein] + tRNA(Leu) + H(+)</text>
        <dbReference type="Rhea" id="RHEA:50416"/>
        <dbReference type="Rhea" id="RHEA-COMP:9613"/>
        <dbReference type="Rhea" id="RHEA-COMP:9622"/>
        <dbReference type="Rhea" id="RHEA-COMP:12672"/>
        <dbReference type="Rhea" id="RHEA-COMP:12673"/>
        <dbReference type="ChEBI" id="CHEBI:15378"/>
        <dbReference type="ChEBI" id="CHEBI:64719"/>
        <dbReference type="ChEBI" id="CHEBI:78442"/>
        <dbReference type="ChEBI" id="CHEBI:78494"/>
        <dbReference type="ChEBI" id="CHEBI:133044"/>
        <dbReference type="EC" id="2.3.2.6"/>
    </reaction>
</comment>
<comment type="catalytic activity">
    <reaction evidence="1">
        <text>L-phenylalanyl-tRNA(Phe) + an N-terminal L-alpha-aminoacyl-[protein] = an N-terminal L-phenylalanyl-L-alpha-aminoacyl-[protein] + tRNA(Phe)</text>
        <dbReference type="Rhea" id="RHEA:43632"/>
        <dbReference type="Rhea" id="RHEA-COMP:9668"/>
        <dbReference type="Rhea" id="RHEA-COMP:9699"/>
        <dbReference type="Rhea" id="RHEA-COMP:10636"/>
        <dbReference type="Rhea" id="RHEA-COMP:10637"/>
        <dbReference type="ChEBI" id="CHEBI:78442"/>
        <dbReference type="ChEBI" id="CHEBI:78531"/>
        <dbReference type="ChEBI" id="CHEBI:78597"/>
        <dbReference type="ChEBI" id="CHEBI:83561"/>
        <dbReference type="EC" id="2.3.2.6"/>
    </reaction>
</comment>
<comment type="subcellular location">
    <subcellularLocation>
        <location evidence="1">Cytoplasm</location>
    </subcellularLocation>
</comment>
<comment type="similarity">
    <text evidence="1">Belongs to the L/F-transferase family.</text>
</comment>
<sequence length="234" mass="26260">MRLYLLPDDACIFPDVGEAGPDGLLAIGGDLTPERLLRAYEEGIFPWYGPGDPILWWSPDPRCVLPLDALHVPRRLMRTVRAKTFEVRLDTAFADVLEQCAATPRPGQGGTWLVPEMRAAYTRLHHLGHAHSVEAWYGGRLVGGLYGVALGGGFFGESMFHAMPDASKVAFVWLARLLVSWGFRFVDCQQTTSHMLRFGAVEMPRTDFLACLHDATRQPSRIGRWRLPQDFVPW</sequence>
<reference key="1">
    <citation type="journal article" date="2009" name="Environ. Microbiol.">
        <title>Contribution of mobile genetic elements to Desulfovibrio vulgaris genome plasticity.</title>
        <authorList>
            <person name="Walker C.B."/>
            <person name="Stolyar S."/>
            <person name="Chivian D."/>
            <person name="Pinel N."/>
            <person name="Gabster J.A."/>
            <person name="Dehal P.S."/>
            <person name="He Z."/>
            <person name="Yang Z.K."/>
            <person name="Yen H.C."/>
            <person name="Zhou J."/>
            <person name="Wall J.D."/>
            <person name="Hazen T.C."/>
            <person name="Arkin A.P."/>
            <person name="Stahl D.A."/>
        </authorList>
    </citation>
    <scope>NUCLEOTIDE SEQUENCE [LARGE SCALE GENOMIC DNA]</scope>
    <source>
        <strain>DP4</strain>
    </source>
</reference>
<proteinExistence type="inferred from homology"/>
<organism>
    <name type="scientific">Nitratidesulfovibrio vulgaris (strain DP4)</name>
    <name type="common">Desulfovibrio vulgaris</name>
    <dbReference type="NCBI Taxonomy" id="391774"/>
    <lineage>
        <taxon>Bacteria</taxon>
        <taxon>Pseudomonadati</taxon>
        <taxon>Thermodesulfobacteriota</taxon>
        <taxon>Desulfovibrionia</taxon>
        <taxon>Desulfovibrionales</taxon>
        <taxon>Desulfovibrionaceae</taxon>
        <taxon>Nitratidesulfovibrio</taxon>
    </lineage>
</organism>
<evidence type="ECO:0000255" key="1">
    <source>
        <dbReference type="HAMAP-Rule" id="MF_00688"/>
    </source>
</evidence>
<feature type="chain" id="PRO_0000304334" description="Leucyl/phenylalanyl-tRNA--protein transferase">
    <location>
        <begin position="1"/>
        <end position="234"/>
    </location>
</feature>
<keyword id="KW-0012">Acyltransferase</keyword>
<keyword id="KW-0963">Cytoplasm</keyword>
<keyword id="KW-0808">Transferase</keyword>
<name>LFTR_NITV4</name>
<gene>
    <name evidence="1" type="primary">aat</name>
    <name type="ordered locus">Dvul_1531</name>
</gene>
<dbReference type="EC" id="2.3.2.6" evidence="1"/>
<dbReference type="EMBL" id="CP000527">
    <property type="protein sequence ID" value="ABM28548.1"/>
    <property type="molecule type" value="Genomic_DNA"/>
</dbReference>
<dbReference type="RefSeq" id="WP_010938894.1">
    <property type="nucleotide sequence ID" value="NC_008751.1"/>
</dbReference>
<dbReference type="SMR" id="A1VDN2"/>
<dbReference type="KEGG" id="dvl:Dvul_1531"/>
<dbReference type="HOGENOM" id="CLU_075045_0_0_7"/>
<dbReference type="Proteomes" id="UP000009173">
    <property type="component" value="Chromosome"/>
</dbReference>
<dbReference type="GO" id="GO:0005737">
    <property type="term" value="C:cytoplasm"/>
    <property type="evidence" value="ECO:0007669"/>
    <property type="project" value="UniProtKB-SubCell"/>
</dbReference>
<dbReference type="GO" id="GO:0008914">
    <property type="term" value="F:leucyl-tRNA--protein transferase activity"/>
    <property type="evidence" value="ECO:0007669"/>
    <property type="project" value="UniProtKB-UniRule"/>
</dbReference>
<dbReference type="GO" id="GO:0030163">
    <property type="term" value="P:protein catabolic process"/>
    <property type="evidence" value="ECO:0007669"/>
    <property type="project" value="UniProtKB-UniRule"/>
</dbReference>
<dbReference type="FunFam" id="3.30.70.3550:FF:000001">
    <property type="entry name" value="Leucyl/phenylalanyl-tRNA--protein transferase"/>
    <property type="match status" value="1"/>
</dbReference>
<dbReference type="Gene3D" id="3.40.630.70">
    <property type="entry name" value="Leucyl/phenylalanyl-tRNA-protein transferase, C-terminal domain"/>
    <property type="match status" value="1"/>
</dbReference>
<dbReference type="Gene3D" id="3.30.70.3550">
    <property type="entry name" value="Leucyl/phenylalanyl-tRNA-protein transferase, N-terminal domain"/>
    <property type="match status" value="1"/>
</dbReference>
<dbReference type="HAMAP" id="MF_00688">
    <property type="entry name" value="Leu_Phe_trans"/>
    <property type="match status" value="1"/>
</dbReference>
<dbReference type="InterPro" id="IPR016181">
    <property type="entry name" value="Acyl_CoA_acyltransferase"/>
</dbReference>
<dbReference type="InterPro" id="IPR004616">
    <property type="entry name" value="Leu/Phe-tRNA_Trfase"/>
</dbReference>
<dbReference type="InterPro" id="IPR042203">
    <property type="entry name" value="Leu/Phe-tRNA_Trfase_C"/>
</dbReference>
<dbReference type="InterPro" id="IPR042221">
    <property type="entry name" value="Leu/Phe-tRNA_Trfase_N"/>
</dbReference>
<dbReference type="NCBIfam" id="TIGR00667">
    <property type="entry name" value="aat"/>
    <property type="match status" value="1"/>
</dbReference>
<dbReference type="PANTHER" id="PTHR30098">
    <property type="entry name" value="LEUCYL/PHENYLALANYL-TRNA--PROTEIN TRANSFERASE"/>
    <property type="match status" value="1"/>
</dbReference>
<dbReference type="PANTHER" id="PTHR30098:SF2">
    <property type="entry name" value="LEUCYL_PHENYLALANYL-TRNA--PROTEIN TRANSFERASE"/>
    <property type="match status" value="1"/>
</dbReference>
<dbReference type="Pfam" id="PF03588">
    <property type="entry name" value="Leu_Phe_trans"/>
    <property type="match status" value="1"/>
</dbReference>
<dbReference type="SUPFAM" id="SSF55729">
    <property type="entry name" value="Acyl-CoA N-acyltransferases (Nat)"/>
    <property type="match status" value="1"/>
</dbReference>